<dbReference type="EC" id="2.7.7.3" evidence="1"/>
<dbReference type="EMBL" id="AM260522">
    <property type="protein sequence ID" value="CAK00431.1"/>
    <property type="molecule type" value="Genomic_DNA"/>
</dbReference>
<dbReference type="RefSeq" id="WP_011578513.1">
    <property type="nucleotide sequence ID" value="NC_008229.1"/>
</dbReference>
<dbReference type="SMR" id="Q17V95"/>
<dbReference type="STRING" id="382638.Hac_1735"/>
<dbReference type="GeneID" id="31758970"/>
<dbReference type="KEGG" id="hac:Hac_1735"/>
<dbReference type="eggNOG" id="COG0669">
    <property type="taxonomic scope" value="Bacteria"/>
</dbReference>
<dbReference type="HOGENOM" id="CLU_100149_1_1_7"/>
<dbReference type="OrthoDB" id="9806661at2"/>
<dbReference type="BioCyc" id="HACI382638:HAC_RS07365-MONOMER"/>
<dbReference type="UniPathway" id="UPA00241">
    <property type="reaction ID" value="UER00355"/>
</dbReference>
<dbReference type="Proteomes" id="UP000000775">
    <property type="component" value="Chromosome"/>
</dbReference>
<dbReference type="GO" id="GO:0005737">
    <property type="term" value="C:cytoplasm"/>
    <property type="evidence" value="ECO:0007669"/>
    <property type="project" value="UniProtKB-SubCell"/>
</dbReference>
<dbReference type="GO" id="GO:0005524">
    <property type="term" value="F:ATP binding"/>
    <property type="evidence" value="ECO:0007669"/>
    <property type="project" value="UniProtKB-KW"/>
</dbReference>
<dbReference type="GO" id="GO:0004595">
    <property type="term" value="F:pantetheine-phosphate adenylyltransferase activity"/>
    <property type="evidence" value="ECO:0007669"/>
    <property type="project" value="UniProtKB-UniRule"/>
</dbReference>
<dbReference type="GO" id="GO:0015937">
    <property type="term" value="P:coenzyme A biosynthetic process"/>
    <property type="evidence" value="ECO:0007669"/>
    <property type="project" value="UniProtKB-UniRule"/>
</dbReference>
<dbReference type="CDD" id="cd02163">
    <property type="entry name" value="PPAT"/>
    <property type="match status" value="1"/>
</dbReference>
<dbReference type="Gene3D" id="3.40.50.620">
    <property type="entry name" value="HUPs"/>
    <property type="match status" value="1"/>
</dbReference>
<dbReference type="HAMAP" id="MF_00151">
    <property type="entry name" value="PPAT_bact"/>
    <property type="match status" value="1"/>
</dbReference>
<dbReference type="InterPro" id="IPR004821">
    <property type="entry name" value="Cyt_trans-like"/>
</dbReference>
<dbReference type="InterPro" id="IPR001980">
    <property type="entry name" value="PPAT"/>
</dbReference>
<dbReference type="InterPro" id="IPR014729">
    <property type="entry name" value="Rossmann-like_a/b/a_fold"/>
</dbReference>
<dbReference type="NCBIfam" id="TIGR01510">
    <property type="entry name" value="coaD_prev_kdtB"/>
    <property type="match status" value="1"/>
</dbReference>
<dbReference type="NCBIfam" id="TIGR00125">
    <property type="entry name" value="cyt_tran_rel"/>
    <property type="match status" value="1"/>
</dbReference>
<dbReference type="PANTHER" id="PTHR21342">
    <property type="entry name" value="PHOSPHOPANTETHEINE ADENYLYLTRANSFERASE"/>
    <property type="match status" value="1"/>
</dbReference>
<dbReference type="PANTHER" id="PTHR21342:SF1">
    <property type="entry name" value="PHOSPHOPANTETHEINE ADENYLYLTRANSFERASE"/>
    <property type="match status" value="1"/>
</dbReference>
<dbReference type="Pfam" id="PF01467">
    <property type="entry name" value="CTP_transf_like"/>
    <property type="match status" value="1"/>
</dbReference>
<dbReference type="PRINTS" id="PR01020">
    <property type="entry name" value="LPSBIOSNTHSS"/>
</dbReference>
<dbReference type="SUPFAM" id="SSF52374">
    <property type="entry name" value="Nucleotidylyl transferase"/>
    <property type="match status" value="1"/>
</dbReference>
<comment type="function">
    <text evidence="1">Reversibly transfers an adenylyl group from ATP to 4'-phosphopantetheine, yielding dephospho-CoA (dPCoA) and pyrophosphate.</text>
</comment>
<comment type="catalytic activity">
    <reaction evidence="1">
        <text>(R)-4'-phosphopantetheine + ATP + H(+) = 3'-dephospho-CoA + diphosphate</text>
        <dbReference type="Rhea" id="RHEA:19801"/>
        <dbReference type="ChEBI" id="CHEBI:15378"/>
        <dbReference type="ChEBI" id="CHEBI:30616"/>
        <dbReference type="ChEBI" id="CHEBI:33019"/>
        <dbReference type="ChEBI" id="CHEBI:57328"/>
        <dbReference type="ChEBI" id="CHEBI:61723"/>
        <dbReference type="EC" id="2.7.7.3"/>
    </reaction>
</comment>
<comment type="cofactor">
    <cofactor evidence="1">
        <name>Mg(2+)</name>
        <dbReference type="ChEBI" id="CHEBI:18420"/>
    </cofactor>
</comment>
<comment type="pathway">
    <text evidence="1">Cofactor biosynthesis; coenzyme A biosynthesis; CoA from (R)-pantothenate: step 4/5.</text>
</comment>
<comment type="subunit">
    <text evidence="1">Homohexamer.</text>
</comment>
<comment type="subcellular location">
    <subcellularLocation>
        <location evidence="1">Cytoplasm</location>
    </subcellularLocation>
</comment>
<comment type="similarity">
    <text evidence="1">Belongs to the bacterial CoaD family.</text>
</comment>
<gene>
    <name evidence="1" type="primary">coaD</name>
    <name type="ordered locus">Hac_1735</name>
</gene>
<evidence type="ECO:0000255" key="1">
    <source>
        <dbReference type="HAMAP-Rule" id="MF_00151"/>
    </source>
</evidence>
<proteinExistence type="inferred from homology"/>
<protein>
    <recommendedName>
        <fullName evidence="1">Phosphopantetheine adenylyltransferase</fullName>
        <ecNumber evidence="1">2.7.7.3</ecNumber>
    </recommendedName>
    <alternativeName>
        <fullName evidence="1">Dephospho-CoA pyrophosphorylase</fullName>
    </alternativeName>
    <alternativeName>
        <fullName evidence="1">Pantetheine-phosphate adenylyltransferase</fullName>
        <shortName evidence="1">PPAT</shortName>
    </alternativeName>
</protein>
<accession>Q17V95</accession>
<reference key="1">
    <citation type="journal article" date="2006" name="PLoS Genet.">
        <title>Who ate whom? Adaptive Helicobacter genomic changes that accompanied a host jump from early humans to large felines.</title>
        <authorList>
            <person name="Eppinger M."/>
            <person name="Baar C."/>
            <person name="Linz B."/>
            <person name="Raddatz G."/>
            <person name="Lanz C."/>
            <person name="Keller H."/>
            <person name="Morelli G."/>
            <person name="Gressmann H."/>
            <person name="Achtman M."/>
            <person name="Schuster S.C."/>
        </authorList>
    </citation>
    <scope>NUCLEOTIDE SEQUENCE [LARGE SCALE GENOMIC DNA]</scope>
    <source>
        <strain>Sheeba</strain>
    </source>
</reference>
<sequence length="157" mass="17786">MQKIGIYPGTFDPVTNGHIDIIHRSSELFEKLIVAVAHSSAKNPMFSLKERLEMIQLATKSFKNVECIAFEGLLANLAKEYHCRVLVRGLRVVSDFEYELQMGYANKSLNHELETLYFMPTLQNAFISSSIVRSIIAHKGDASHLVPKEIYPFISKV</sequence>
<name>COAD_HELAH</name>
<feature type="chain" id="PRO_1000011157" description="Phosphopantetheine adenylyltransferase">
    <location>
        <begin position="1"/>
        <end position="157"/>
    </location>
</feature>
<feature type="binding site" evidence="1">
    <location>
        <begin position="10"/>
        <end position="11"/>
    </location>
    <ligand>
        <name>ATP</name>
        <dbReference type="ChEBI" id="CHEBI:30616"/>
    </ligand>
</feature>
<feature type="binding site" evidence="1">
    <location>
        <position position="10"/>
    </location>
    <ligand>
        <name>substrate</name>
    </ligand>
</feature>
<feature type="binding site" evidence="1">
    <location>
        <position position="18"/>
    </location>
    <ligand>
        <name>ATP</name>
        <dbReference type="ChEBI" id="CHEBI:30616"/>
    </ligand>
</feature>
<feature type="binding site" evidence="1">
    <location>
        <position position="42"/>
    </location>
    <ligand>
        <name>substrate</name>
    </ligand>
</feature>
<feature type="binding site" evidence="1">
    <location>
        <position position="74"/>
    </location>
    <ligand>
        <name>substrate</name>
    </ligand>
</feature>
<feature type="binding site" evidence="1">
    <location>
        <position position="88"/>
    </location>
    <ligand>
        <name>substrate</name>
    </ligand>
</feature>
<feature type="binding site" evidence="1">
    <location>
        <begin position="89"/>
        <end position="91"/>
    </location>
    <ligand>
        <name>ATP</name>
        <dbReference type="ChEBI" id="CHEBI:30616"/>
    </ligand>
</feature>
<feature type="binding site" evidence="1">
    <location>
        <position position="99"/>
    </location>
    <ligand>
        <name>ATP</name>
        <dbReference type="ChEBI" id="CHEBI:30616"/>
    </ligand>
</feature>
<feature type="binding site" evidence="1">
    <location>
        <begin position="124"/>
        <end position="130"/>
    </location>
    <ligand>
        <name>ATP</name>
        <dbReference type="ChEBI" id="CHEBI:30616"/>
    </ligand>
</feature>
<feature type="site" description="Transition state stabilizer" evidence="1">
    <location>
        <position position="18"/>
    </location>
</feature>
<organism>
    <name type="scientific">Helicobacter acinonychis (strain Sheeba)</name>
    <dbReference type="NCBI Taxonomy" id="382638"/>
    <lineage>
        <taxon>Bacteria</taxon>
        <taxon>Pseudomonadati</taxon>
        <taxon>Campylobacterota</taxon>
        <taxon>Epsilonproteobacteria</taxon>
        <taxon>Campylobacterales</taxon>
        <taxon>Helicobacteraceae</taxon>
        <taxon>Helicobacter</taxon>
    </lineage>
</organism>
<keyword id="KW-0067">ATP-binding</keyword>
<keyword id="KW-0173">Coenzyme A biosynthesis</keyword>
<keyword id="KW-0963">Cytoplasm</keyword>
<keyword id="KW-0460">Magnesium</keyword>
<keyword id="KW-0547">Nucleotide-binding</keyword>
<keyword id="KW-0548">Nucleotidyltransferase</keyword>
<keyword id="KW-0808">Transferase</keyword>